<keyword id="KW-0030">Aminoacyl-tRNA synthetase</keyword>
<keyword id="KW-0067">ATP-binding</keyword>
<keyword id="KW-0963">Cytoplasm</keyword>
<keyword id="KW-0436">Ligase</keyword>
<keyword id="KW-0547">Nucleotide-binding</keyword>
<keyword id="KW-0648">Protein biosynthesis</keyword>
<keyword id="KW-1185">Reference proteome</keyword>
<comment type="function">
    <text evidence="1">Aspartyl-tRNA synthetase with relaxed tRNA specificity since it is able to aspartylate not only its cognate tRNA(Asp) but also tRNA(Asn). Reaction proceeds in two steps: L-aspartate is first activated by ATP to form Asp-AMP and then transferred to the acceptor end of tRNA(Asp/Asn).</text>
</comment>
<comment type="catalytic activity">
    <reaction evidence="1">
        <text>tRNA(Asx) + L-aspartate + ATP = L-aspartyl-tRNA(Asx) + AMP + diphosphate</text>
        <dbReference type="Rhea" id="RHEA:18349"/>
        <dbReference type="Rhea" id="RHEA-COMP:9710"/>
        <dbReference type="Rhea" id="RHEA-COMP:9711"/>
        <dbReference type="ChEBI" id="CHEBI:29991"/>
        <dbReference type="ChEBI" id="CHEBI:30616"/>
        <dbReference type="ChEBI" id="CHEBI:33019"/>
        <dbReference type="ChEBI" id="CHEBI:78442"/>
        <dbReference type="ChEBI" id="CHEBI:78516"/>
        <dbReference type="ChEBI" id="CHEBI:456215"/>
        <dbReference type="EC" id="6.1.1.23"/>
    </reaction>
</comment>
<comment type="subunit">
    <text evidence="1">Homodimer.</text>
</comment>
<comment type="subcellular location">
    <subcellularLocation>
        <location evidence="1">Cytoplasm</location>
    </subcellularLocation>
</comment>
<comment type="similarity">
    <text evidence="1">Belongs to the class-II aminoacyl-tRNA synthetase family. Type 1 subfamily.</text>
</comment>
<name>SYDND_PARUW</name>
<protein>
    <recommendedName>
        <fullName evidence="1">Aspartate--tRNA(Asp/Asn) ligase</fullName>
        <ecNumber evidence="1">6.1.1.23</ecNumber>
    </recommendedName>
    <alternativeName>
        <fullName evidence="1">Aspartyl-tRNA synthetase</fullName>
        <shortName evidence="1">AspRS</shortName>
    </alternativeName>
    <alternativeName>
        <fullName evidence="1">Non-discriminating aspartyl-tRNA synthetase</fullName>
        <shortName evidence="1">ND-AspRS</shortName>
    </alternativeName>
</protein>
<reference key="1">
    <citation type="journal article" date="2004" name="Science">
        <title>Illuminating the evolutionary history of chlamydiae.</title>
        <authorList>
            <person name="Horn M."/>
            <person name="Collingro A."/>
            <person name="Schmitz-Esser S."/>
            <person name="Beier C.L."/>
            <person name="Purkhold U."/>
            <person name="Fartmann B."/>
            <person name="Brandt P."/>
            <person name="Nyakatura G.J."/>
            <person name="Droege M."/>
            <person name="Frishman D."/>
            <person name="Rattei T."/>
            <person name="Mewes H.-W."/>
            <person name="Wagner M."/>
        </authorList>
    </citation>
    <scope>NUCLEOTIDE SEQUENCE [LARGE SCALE GENOMIC DNA]</scope>
    <source>
        <strain>UWE25</strain>
    </source>
</reference>
<gene>
    <name evidence="1" type="primary">aspS</name>
    <name type="ordered locus">pc0384</name>
</gene>
<accession>Q6ME91</accession>
<feature type="chain" id="PRO_0000110915" description="Aspartate--tRNA(Asp/Asn) ligase">
    <location>
        <begin position="1"/>
        <end position="599"/>
    </location>
</feature>
<feature type="region of interest" description="Aspartate" evidence="1">
    <location>
        <begin position="207"/>
        <end position="210"/>
    </location>
</feature>
<feature type="binding site" evidence="1">
    <location>
        <position position="183"/>
    </location>
    <ligand>
        <name>L-aspartate</name>
        <dbReference type="ChEBI" id="CHEBI:29991"/>
    </ligand>
</feature>
<feature type="binding site" evidence="1">
    <location>
        <begin position="229"/>
        <end position="231"/>
    </location>
    <ligand>
        <name>ATP</name>
        <dbReference type="ChEBI" id="CHEBI:30616"/>
    </ligand>
</feature>
<feature type="binding site" evidence="1">
    <location>
        <position position="229"/>
    </location>
    <ligand>
        <name>L-aspartate</name>
        <dbReference type="ChEBI" id="CHEBI:29991"/>
    </ligand>
</feature>
<feature type="binding site" evidence="1">
    <location>
        <position position="238"/>
    </location>
    <ligand>
        <name>ATP</name>
        <dbReference type="ChEBI" id="CHEBI:30616"/>
    </ligand>
</feature>
<feature type="binding site" evidence="1">
    <location>
        <position position="456"/>
    </location>
    <ligand>
        <name>L-aspartate</name>
        <dbReference type="ChEBI" id="CHEBI:29991"/>
    </ligand>
</feature>
<feature type="binding site" evidence="1">
    <location>
        <position position="490"/>
    </location>
    <ligand>
        <name>ATP</name>
        <dbReference type="ChEBI" id="CHEBI:30616"/>
    </ligand>
</feature>
<feature type="binding site" evidence="1">
    <location>
        <position position="497"/>
    </location>
    <ligand>
        <name>L-aspartate</name>
        <dbReference type="ChEBI" id="CHEBI:29991"/>
    </ligand>
</feature>
<feature type="binding site" evidence="1">
    <location>
        <begin position="542"/>
        <end position="545"/>
    </location>
    <ligand>
        <name>ATP</name>
        <dbReference type="ChEBI" id="CHEBI:30616"/>
    </ligand>
</feature>
<feature type="site" description="Important for tRNA non-discrimination" evidence="1">
    <location>
        <position position="38"/>
    </location>
</feature>
<feature type="site" description="Important for tRNA non-discrimination" evidence="1">
    <location>
        <position position="90"/>
    </location>
</feature>
<organism>
    <name type="scientific">Protochlamydia amoebophila (strain UWE25)</name>
    <dbReference type="NCBI Taxonomy" id="264201"/>
    <lineage>
        <taxon>Bacteria</taxon>
        <taxon>Pseudomonadati</taxon>
        <taxon>Chlamydiota</taxon>
        <taxon>Chlamydiia</taxon>
        <taxon>Parachlamydiales</taxon>
        <taxon>Parachlamydiaceae</taxon>
        <taxon>Candidatus Protochlamydia</taxon>
    </lineage>
</organism>
<sequence length="599" mass="69120">MNLMMFDYRRSHTCGQLRKEKVNSQVTLSGWVNRRRDHGGLIFIDLRDRFGLTQLVFDPIKSPTAHLAAEKLRSEWVISVKGTVIPRQEGMTNPKLPTGEIEIMVHEMDILSKSKTPPFSVSDDLIEVNEELRLKYRYLDIRRGDVAKKLITRHQAMLAVRNYLNNQGFLEISTPILGKSTPEGARDYLVPSRVYPGNFYALPQSPQIFKQLLMISGMDRYFQIAQCFRDEDLRADRQPEFTQIDMEMSFGTPEDLMNIVEDLIKTVFKTCSNIDVPTPFKRLSHAICMEEYGCDRPDLRFGMKLHNLNHLAAQTTFSVFLDQIRENGLVKGFCIKGGADFSRKTIDEYTEFVGRLGVKGLAWIKRQENGLNSSIVKFFPESIHQQLIEEMEMEVGDIIFMIANTPSKTNQALDHLRRKIARDRNLVDPHHYEFLWVTDFPLFSWNEEEKRLQSEHHPFTSPHLEDLHLMETNPLKMRSSGYDIVLNGYEIGGGSQRIHNSDLQQKIFERLKFSPEELETKFGFFLEALNYGTPPHLGIALGLDRIIMILTQTENIRDVIAFPKTQKASDLMIECPSPVANEQLKELEIRVPDSQFSWT</sequence>
<evidence type="ECO:0000255" key="1">
    <source>
        <dbReference type="HAMAP-Rule" id="MF_00044"/>
    </source>
</evidence>
<proteinExistence type="inferred from homology"/>
<dbReference type="EC" id="6.1.1.23" evidence="1"/>
<dbReference type="EMBL" id="BX908798">
    <property type="protein sequence ID" value="CAF23108.1"/>
    <property type="molecule type" value="Genomic_DNA"/>
</dbReference>
<dbReference type="SMR" id="Q6ME91"/>
<dbReference type="STRING" id="264201.pc0384"/>
<dbReference type="KEGG" id="pcu:PC_RS01880"/>
<dbReference type="eggNOG" id="COG0173">
    <property type="taxonomic scope" value="Bacteria"/>
</dbReference>
<dbReference type="HOGENOM" id="CLU_014330_3_2_0"/>
<dbReference type="OrthoDB" id="9802326at2"/>
<dbReference type="Proteomes" id="UP000000529">
    <property type="component" value="Chromosome"/>
</dbReference>
<dbReference type="GO" id="GO:0005737">
    <property type="term" value="C:cytoplasm"/>
    <property type="evidence" value="ECO:0007669"/>
    <property type="project" value="UniProtKB-SubCell"/>
</dbReference>
<dbReference type="GO" id="GO:0004815">
    <property type="term" value="F:aspartate-tRNA ligase activity"/>
    <property type="evidence" value="ECO:0007669"/>
    <property type="project" value="UniProtKB-UniRule"/>
</dbReference>
<dbReference type="GO" id="GO:0050560">
    <property type="term" value="F:aspartate-tRNA(Asn) ligase activity"/>
    <property type="evidence" value="ECO:0007669"/>
    <property type="project" value="UniProtKB-EC"/>
</dbReference>
<dbReference type="GO" id="GO:0005524">
    <property type="term" value="F:ATP binding"/>
    <property type="evidence" value="ECO:0007669"/>
    <property type="project" value="UniProtKB-UniRule"/>
</dbReference>
<dbReference type="GO" id="GO:0003676">
    <property type="term" value="F:nucleic acid binding"/>
    <property type="evidence" value="ECO:0007669"/>
    <property type="project" value="InterPro"/>
</dbReference>
<dbReference type="GO" id="GO:0006422">
    <property type="term" value="P:aspartyl-tRNA aminoacylation"/>
    <property type="evidence" value="ECO:0007669"/>
    <property type="project" value="UniProtKB-UniRule"/>
</dbReference>
<dbReference type="CDD" id="cd00777">
    <property type="entry name" value="AspRS_core"/>
    <property type="match status" value="1"/>
</dbReference>
<dbReference type="CDD" id="cd04317">
    <property type="entry name" value="EcAspRS_like_N"/>
    <property type="match status" value="1"/>
</dbReference>
<dbReference type="Gene3D" id="3.30.930.10">
    <property type="entry name" value="Bira Bifunctional Protein, Domain 2"/>
    <property type="match status" value="1"/>
</dbReference>
<dbReference type="Gene3D" id="3.30.1360.30">
    <property type="entry name" value="GAD-like domain"/>
    <property type="match status" value="1"/>
</dbReference>
<dbReference type="Gene3D" id="2.40.50.140">
    <property type="entry name" value="Nucleic acid-binding proteins"/>
    <property type="match status" value="1"/>
</dbReference>
<dbReference type="HAMAP" id="MF_00044">
    <property type="entry name" value="Asp_tRNA_synth_type1"/>
    <property type="match status" value="1"/>
</dbReference>
<dbReference type="InterPro" id="IPR004364">
    <property type="entry name" value="Aa-tRNA-synt_II"/>
</dbReference>
<dbReference type="InterPro" id="IPR006195">
    <property type="entry name" value="aa-tRNA-synth_II"/>
</dbReference>
<dbReference type="InterPro" id="IPR045864">
    <property type="entry name" value="aa-tRNA-synth_II/BPL/LPL"/>
</dbReference>
<dbReference type="InterPro" id="IPR004524">
    <property type="entry name" value="Asp-tRNA-ligase_1"/>
</dbReference>
<dbReference type="InterPro" id="IPR047089">
    <property type="entry name" value="Asp-tRNA-ligase_1_N"/>
</dbReference>
<dbReference type="InterPro" id="IPR002312">
    <property type="entry name" value="Asp/Asn-tRNA-synth_IIb"/>
</dbReference>
<dbReference type="InterPro" id="IPR047090">
    <property type="entry name" value="AspRS_core"/>
</dbReference>
<dbReference type="InterPro" id="IPR004115">
    <property type="entry name" value="GAD-like_sf"/>
</dbReference>
<dbReference type="InterPro" id="IPR029351">
    <property type="entry name" value="GAD_dom"/>
</dbReference>
<dbReference type="InterPro" id="IPR012340">
    <property type="entry name" value="NA-bd_OB-fold"/>
</dbReference>
<dbReference type="InterPro" id="IPR004365">
    <property type="entry name" value="NA-bd_OB_tRNA"/>
</dbReference>
<dbReference type="NCBIfam" id="TIGR00459">
    <property type="entry name" value="aspS_bact"/>
    <property type="match status" value="1"/>
</dbReference>
<dbReference type="NCBIfam" id="NF001750">
    <property type="entry name" value="PRK00476.1"/>
    <property type="match status" value="1"/>
</dbReference>
<dbReference type="PANTHER" id="PTHR22594:SF5">
    <property type="entry name" value="ASPARTATE--TRNA LIGASE, MITOCHONDRIAL"/>
    <property type="match status" value="1"/>
</dbReference>
<dbReference type="PANTHER" id="PTHR22594">
    <property type="entry name" value="ASPARTYL/LYSYL-TRNA SYNTHETASE"/>
    <property type="match status" value="1"/>
</dbReference>
<dbReference type="Pfam" id="PF02938">
    <property type="entry name" value="GAD"/>
    <property type="match status" value="1"/>
</dbReference>
<dbReference type="Pfam" id="PF00152">
    <property type="entry name" value="tRNA-synt_2"/>
    <property type="match status" value="1"/>
</dbReference>
<dbReference type="Pfam" id="PF01336">
    <property type="entry name" value="tRNA_anti-codon"/>
    <property type="match status" value="1"/>
</dbReference>
<dbReference type="PRINTS" id="PR01042">
    <property type="entry name" value="TRNASYNTHASP"/>
</dbReference>
<dbReference type="SUPFAM" id="SSF55681">
    <property type="entry name" value="Class II aaRS and biotin synthetases"/>
    <property type="match status" value="1"/>
</dbReference>
<dbReference type="SUPFAM" id="SSF55261">
    <property type="entry name" value="GAD domain-like"/>
    <property type="match status" value="1"/>
</dbReference>
<dbReference type="SUPFAM" id="SSF50249">
    <property type="entry name" value="Nucleic acid-binding proteins"/>
    <property type="match status" value="1"/>
</dbReference>
<dbReference type="PROSITE" id="PS50862">
    <property type="entry name" value="AA_TRNA_LIGASE_II"/>
    <property type="match status" value="1"/>
</dbReference>